<reference key="1">
    <citation type="submission" date="1998-11" db="EMBL/GenBank/DDBJ databases">
        <title>Cloning and regulation of the gdhA gene from Botrytis cinerea.</title>
        <authorList>
            <person name="Santos M."/>
        </authorList>
    </citation>
    <scope>NUCLEOTIDE SEQUENCE [GENOMIC DNA]</scope>
    <source>
        <strain>2850</strain>
    </source>
</reference>
<protein>
    <recommendedName>
        <fullName>NADP-specific glutamate dehydrogenase</fullName>
        <shortName>NADP-GDH</shortName>
        <ecNumber>1.4.1.4</ecNumber>
    </recommendedName>
    <alternativeName>
        <fullName>NADP-dependent glutamate dehydrogenase</fullName>
    </alternativeName>
</protein>
<keyword id="KW-0521">NADP</keyword>
<keyword id="KW-0560">Oxidoreductase</keyword>
<name>DHE4_BOTFU</name>
<feature type="chain" id="PRO_0000182784" description="NADP-specific glutamate dehydrogenase">
    <location>
        <begin position="1"/>
        <end position="450"/>
    </location>
</feature>
<feature type="active site" evidence="2">
    <location>
        <position position="114"/>
    </location>
</feature>
<dbReference type="EC" id="1.4.1.4"/>
<dbReference type="EMBL" id="AF109684">
    <property type="protein sequence ID" value="AAC95390.1"/>
    <property type="molecule type" value="Genomic_DNA"/>
</dbReference>
<dbReference type="SMR" id="O93934"/>
<dbReference type="GO" id="GO:0005829">
    <property type="term" value="C:cytosol"/>
    <property type="evidence" value="ECO:0007669"/>
    <property type="project" value="TreeGrafter"/>
</dbReference>
<dbReference type="GO" id="GO:0004354">
    <property type="term" value="F:glutamate dehydrogenase (NADP+) activity"/>
    <property type="evidence" value="ECO:0007669"/>
    <property type="project" value="UniProtKB-EC"/>
</dbReference>
<dbReference type="GO" id="GO:0006537">
    <property type="term" value="P:glutamate biosynthetic process"/>
    <property type="evidence" value="ECO:0007669"/>
    <property type="project" value="TreeGrafter"/>
</dbReference>
<dbReference type="CDD" id="cd05313">
    <property type="entry name" value="NAD_bind_2_Glu_DH"/>
    <property type="match status" value="1"/>
</dbReference>
<dbReference type="FunFam" id="1.10.285.10:FF:000001">
    <property type="entry name" value="Glutamate dehydrogenase"/>
    <property type="match status" value="1"/>
</dbReference>
<dbReference type="FunFam" id="1.10.285.10:FF:000003">
    <property type="entry name" value="Glutamate dehydrogenase"/>
    <property type="match status" value="1"/>
</dbReference>
<dbReference type="FunFam" id="3.40.50.10860:FF:000002">
    <property type="entry name" value="Glutamate dehydrogenase"/>
    <property type="match status" value="1"/>
</dbReference>
<dbReference type="FunFam" id="3.40.50.720:FF:000030">
    <property type="entry name" value="Glutamate dehydrogenase"/>
    <property type="match status" value="1"/>
</dbReference>
<dbReference type="Gene3D" id="1.10.285.10">
    <property type="entry name" value="Glutamate Dehydrogenase, chain A, domain 3"/>
    <property type="match status" value="2"/>
</dbReference>
<dbReference type="Gene3D" id="3.40.50.10860">
    <property type="entry name" value="Leucine Dehydrogenase, chain A, domain 1"/>
    <property type="match status" value="1"/>
</dbReference>
<dbReference type="Gene3D" id="3.40.50.720">
    <property type="entry name" value="NAD(P)-binding Rossmann-like Domain"/>
    <property type="match status" value="1"/>
</dbReference>
<dbReference type="InterPro" id="IPR046346">
    <property type="entry name" value="Aminoacid_DH-like_N_sf"/>
</dbReference>
<dbReference type="InterPro" id="IPR006095">
    <property type="entry name" value="Glu/Leu/Phe/Val/Trp_DH"/>
</dbReference>
<dbReference type="InterPro" id="IPR006096">
    <property type="entry name" value="Glu/Leu/Phe/Val/Trp_DH_C"/>
</dbReference>
<dbReference type="InterPro" id="IPR006097">
    <property type="entry name" value="Glu/Leu/Phe/Val/Trp_DH_dimer"/>
</dbReference>
<dbReference type="InterPro" id="IPR033524">
    <property type="entry name" value="Glu/Leu/Phe/Val_DH_AS"/>
</dbReference>
<dbReference type="InterPro" id="IPR014362">
    <property type="entry name" value="Glu_DH"/>
</dbReference>
<dbReference type="InterPro" id="IPR050724">
    <property type="entry name" value="Glu_Leu_Phe_Val_DH"/>
</dbReference>
<dbReference type="InterPro" id="IPR036291">
    <property type="entry name" value="NAD(P)-bd_dom_sf"/>
</dbReference>
<dbReference type="InterPro" id="IPR033922">
    <property type="entry name" value="NAD_bind_Glu_DH"/>
</dbReference>
<dbReference type="NCBIfam" id="NF006929">
    <property type="entry name" value="PRK09414.1"/>
    <property type="match status" value="1"/>
</dbReference>
<dbReference type="PANTHER" id="PTHR43571">
    <property type="entry name" value="NADP-SPECIFIC GLUTAMATE DEHYDROGENASE 1-RELATED"/>
    <property type="match status" value="1"/>
</dbReference>
<dbReference type="PANTHER" id="PTHR43571:SF1">
    <property type="entry name" value="NADP-SPECIFIC GLUTAMATE DEHYDROGENASE 1-RELATED"/>
    <property type="match status" value="1"/>
</dbReference>
<dbReference type="Pfam" id="PF00208">
    <property type="entry name" value="ELFV_dehydrog"/>
    <property type="match status" value="1"/>
</dbReference>
<dbReference type="Pfam" id="PF02812">
    <property type="entry name" value="ELFV_dehydrog_N"/>
    <property type="match status" value="1"/>
</dbReference>
<dbReference type="PIRSF" id="PIRSF000185">
    <property type="entry name" value="Glu_DH"/>
    <property type="match status" value="1"/>
</dbReference>
<dbReference type="PRINTS" id="PR00082">
    <property type="entry name" value="GLFDHDRGNASE"/>
</dbReference>
<dbReference type="SMART" id="SM00839">
    <property type="entry name" value="ELFV_dehydrog"/>
    <property type="match status" value="1"/>
</dbReference>
<dbReference type="SUPFAM" id="SSF53223">
    <property type="entry name" value="Aminoacid dehydrogenase-like, N-terminal domain"/>
    <property type="match status" value="1"/>
</dbReference>
<dbReference type="SUPFAM" id="SSF51735">
    <property type="entry name" value="NAD(P)-binding Rossmann-fold domains"/>
    <property type="match status" value="1"/>
</dbReference>
<dbReference type="PROSITE" id="PS00074">
    <property type="entry name" value="GLFV_DEHYDROGENASE"/>
    <property type="match status" value="1"/>
</dbReference>
<evidence type="ECO:0000250" key="1"/>
<evidence type="ECO:0000255" key="2">
    <source>
        <dbReference type="PROSITE-ProRule" id="PRU10011"/>
    </source>
</evidence>
<evidence type="ECO:0000305" key="3"/>
<comment type="catalytic activity">
    <reaction>
        <text>L-glutamate + NADP(+) + H2O = 2-oxoglutarate + NH4(+) + NADPH + H(+)</text>
        <dbReference type="Rhea" id="RHEA:11612"/>
        <dbReference type="ChEBI" id="CHEBI:15377"/>
        <dbReference type="ChEBI" id="CHEBI:15378"/>
        <dbReference type="ChEBI" id="CHEBI:16810"/>
        <dbReference type="ChEBI" id="CHEBI:28938"/>
        <dbReference type="ChEBI" id="CHEBI:29985"/>
        <dbReference type="ChEBI" id="CHEBI:57783"/>
        <dbReference type="ChEBI" id="CHEBI:58349"/>
        <dbReference type="EC" id="1.4.1.4"/>
    </reaction>
</comment>
<comment type="subunit">
    <text evidence="1">Homohexamer.</text>
</comment>
<comment type="similarity">
    <text evidence="3">Belongs to the Glu/Leu/Phe/Val dehydrogenases family.</text>
</comment>
<organism>
    <name type="scientific">Botryotinia fuckeliana</name>
    <name type="common">Noble rot fungus</name>
    <name type="synonym">Botrytis cinerea</name>
    <dbReference type="NCBI Taxonomy" id="40559"/>
    <lineage>
        <taxon>Eukaryota</taxon>
        <taxon>Fungi</taxon>
        <taxon>Dikarya</taxon>
        <taxon>Ascomycota</taxon>
        <taxon>Pezizomycotina</taxon>
        <taxon>Leotiomycetes</taxon>
        <taxon>Helotiales</taxon>
        <taxon>Sclerotiniaceae</taxon>
        <taxon>Botrytis</taxon>
    </lineage>
</organism>
<accession>O93934</accession>
<sequence length="450" mass="49044">MSNLPSEPEFEQAYNELASTLENSTLFEKNPEYRTALKVVSIPERVIQFRVVWEDDKNQVQVNRGYRVQFNSALGPYKGGLRFHPTVNLSVLKFLGFEQIFKNALTGLNIGGGKGGADFDPKGKSDNEIRRFCVSFMRELSKHIGADTDVPAGDINVGGREIGFLFGAYKAIQNKWEGVLTGKGGSWGGSLIRPEATGYGLVYYVAHMIQYAGQGSFQGKRVAISGSGNVAQYAALKCIELGATVVSLSDSQGSLIAEGDAYFTPEDVGKIAELKLKRQSLTAFEHGGKYKYIEGSRPWTHVKVDVALPCATQNEVSKEEAESLVASGARYIAEGSNMGCTQEAIDVFEAERKEKKDKAIWYAPGKAANAGGVAVSGLEMAQNSARISWTQEEVDEKLKDIMKNAFETGLETPKKYVEAKDGEYPSLVAGSNIAGFVKVASAMHNHGDWW</sequence>
<proteinExistence type="inferred from homology"/>
<gene>
    <name type="primary">gdhA</name>
</gene>